<proteinExistence type="inferred from homology"/>
<comment type="function">
    <text evidence="1">Part of the RFC clamp loader complex which loads the PCNA sliding clamp onto DNA.</text>
</comment>
<comment type="subunit">
    <text evidence="1">Heteromultimer composed of small subunits (RfcS) and large subunits (RfcL).</text>
</comment>
<comment type="similarity">
    <text evidence="1">Belongs to the activator 1 small subunits family. RfcS subfamily.</text>
</comment>
<comment type="sequence caution" evidence="2">
    <conflict type="erroneous initiation">
        <sequence resource="EMBL-CDS" id="CAC12618"/>
    </conflict>
</comment>
<keyword id="KW-0067">ATP-binding</keyword>
<keyword id="KW-0235">DNA replication</keyword>
<keyword id="KW-0547">Nucleotide-binding</keyword>
<keyword id="KW-1185">Reference proteome</keyword>
<protein>
    <recommendedName>
        <fullName evidence="1">Replication factor C small subunit</fullName>
        <shortName evidence="1">RFC small subunit</shortName>
    </recommendedName>
    <alternativeName>
        <fullName evidence="1">Clamp loader small subunit</fullName>
    </alternativeName>
</protein>
<reference key="1">
    <citation type="journal article" date="2000" name="Nature">
        <title>The genome sequence of the thermoacidophilic scavenger Thermoplasma acidophilum.</title>
        <authorList>
            <person name="Ruepp A."/>
            <person name="Graml W."/>
            <person name="Santos-Martinez M.-L."/>
            <person name="Koretke K.K."/>
            <person name="Volker C."/>
            <person name="Mewes H.-W."/>
            <person name="Frishman D."/>
            <person name="Stocker S."/>
            <person name="Lupas A.N."/>
            <person name="Baumeister W."/>
        </authorList>
    </citation>
    <scope>NUCLEOTIDE SEQUENCE [LARGE SCALE GENOMIC DNA]</scope>
    <source>
        <strain>ATCC 25905 / DSM 1728 / JCM 9062 / NBRC 15155 / AMRC-C165</strain>
    </source>
</reference>
<evidence type="ECO:0000255" key="1">
    <source>
        <dbReference type="HAMAP-Rule" id="MF_01509"/>
    </source>
</evidence>
<evidence type="ECO:0000305" key="2"/>
<feature type="chain" id="PRO_0000135986" description="Replication factor C small subunit">
    <location>
        <begin position="1"/>
        <end position="318"/>
    </location>
</feature>
<feature type="binding site" evidence="1">
    <location>
        <begin position="43"/>
        <end position="50"/>
    </location>
    <ligand>
        <name>ATP</name>
        <dbReference type="ChEBI" id="CHEBI:30616"/>
    </ligand>
</feature>
<organism>
    <name type="scientific">Thermoplasma acidophilum (strain ATCC 25905 / DSM 1728 / JCM 9062 / NBRC 15155 / AMRC-C165)</name>
    <dbReference type="NCBI Taxonomy" id="273075"/>
    <lineage>
        <taxon>Archaea</taxon>
        <taxon>Methanobacteriati</taxon>
        <taxon>Thermoplasmatota</taxon>
        <taxon>Thermoplasmata</taxon>
        <taxon>Thermoplasmatales</taxon>
        <taxon>Thermoplasmataceae</taxon>
        <taxon>Thermoplasma</taxon>
    </lineage>
</organism>
<dbReference type="EMBL" id="AL445067">
    <property type="protein sequence ID" value="CAC12618.1"/>
    <property type="status" value="ALT_INIT"/>
    <property type="molecule type" value="Genomic_DNA"/>
</dbReference>
<dbReference type="RefSeq" id="WP_010901899.1">
    <property type="nucleotide sequence ID" value="NC_002578.1"/>
</dbReference>
<dbReference type="SMR" id="Q9HI47"/>
<dbReference type="FunCoup" id="Q9HI47">
    <property type="interactions" value="102"/>
</dbReference>
<dbReference type="STRING" id="273075.gene:9572731"/>
<dbReference type="PaxDb" id="273075-Ta1500m"/>
<dbReference type="EnsemblBacteria" id="CAC12618">
    <property type="protein sequence ID" value="CAC12618"/>
    <property type="gene ID" value="CAC12618"/>
</dbReference>
<dbReference type="KEGG" id="tac:Ta1500"/>
<dbReference type="eggNOG" id="arCOG00469">
    <property type="taxonomic scope" value="Archaea"/>
</dbReference>
<dbReference type="HOGENOM" id="CLU_042324_2_1_2"/>
<dbReference type="InParanoid" id="Q9HI47"/>
<dbReference type="OrthoDB" id="7928at2157"/>
<dbReference type="Proteomes" id="UP000001024">
    <property type="component" value="Chromosome"/>
</dbReference>
<dbReference type="GO" id="GO:0005663">
    <property type="term" value="C:DNA replication factor C complex"/>
    <property type="evidence" value="ECO:0007669"/>
    <property type="project" value="InterPro"/>
</dbReference>
<dbReference type="GO" id="GO:0005524">
    <property type="term" value="F:ATP binding"/>
    <property type="evidence" value="ECO:0007669"/>
    <property type="project" value="UniProtKB-UniRule"/>
</dbReference>
<dbReference type="GO" id="GO:0016887">
    <property type="term" value="F:ATP hydrolysis activity"/>
    <property type="evidence" value="ECO:0007669"/>
    <property type="project" value="InterPro"/>
</dbReference>
<dbReference type="GO" id="GO:0003677">
    <property type="term" value="F:DNA binding"/>
    <property type="evidence" value="ECO:0007669"/>
    <property type="project" value="InterPro"/>
</dbReference>
<dbReference type="GO" id="GO:0003689">
    <property type="term" value="F:DNA clamp loader activity"/>
    <property type="evidence" value="ECO:0007669"/>
    <property type="project" value="UniProtKB-UniRule"/>
</dbReference>
<dbReference type="GO" id="GO:0006281">
    <property type="term" value="P:DNA repair"/>
    <property type="evidence" value="ECO:0007669"/>
    <property type="project" value="TreeGrafter"/>
</dbReference>
<dbReference type="GO" id="GO:0006261">
    <property type="term" value="P:DNA-templated DNA replication"/>
    <property type="evidence" value="ECO:0007669"/>
    <property type="project" value="TreeGrafter"/>
</dbReference>
<dbReference type="CDD" id="cd00009">
    <property type="entry name" value="AAA"/>
    <property type="match status" value="1"/>
</dbReference>
<dbReference type="CDD" id="cd18140">
    <property type="entry name" value="HLD_clamp_RFC"/>
    <property type="match status" value="1"/>
</dbReference>
<dbReference type="FunFam" id="1.20.272.10:FF:000029">
    <property type="entry name" value="Replication factor C small subunit"/>
    <property type="match status" value="1"/>
</dbReference>
<dbReference type="FunFam" id="3.40.50.300:FF:000952">
    <property type="entry name" value="Replication factor C subunit 2"/>
    <property type="match status" value="1"/>
</dbReference>
<dbReference type="Gene3D" id="1.10.8.60">
    <property type="match status" value="1"/>
</dbReference>
<dbReference type="Gene3D" id="1.20.272.10">
    <property type="match status" value="1"/>
</dbReference>
<dbReference type="Gene3D" id="3.40.50.300">
    <property type="entry name" value="P-loop containing nucleotide triphosphate hydrolases"/>
    <property type="match status" value="1"/>
</dbReference>
<dbReference type="HAMAP" id="MF_01509">
    <property type="entry name" value="RfcS"/>
    <property type="match status" value="1"/>
</dbReference>
<dbReference type="InterPro" id="IPR003593">
    <property type="entry name" value="AAA+_ATPase"/>
</dbReference>
<dbReference type="InterPro" id="IPR003959">
    <property type="entry name" value="ATPase_AAA_core"/>
</dbReference>
<dbReference type="InterPro" id="IPR008921">
    <property type="entry name" value="DNA_pol3_clamp-load_cplx_C"/>
</dbReference>
<dbReference type="InterPro" id="IPR050238">
    <property type="entry name" value="DNA_Rep/Repair_Clamp_Loader"/>
</dbReference>
<dbReference type="InterPro" id="IPR027417">
    <property type="entry name" value="P-loop_NTPase"/>
</dbReference>
<dbReference type="InterPro" id="IPR023748">
    <property type="entry name" value="Rep_factor-C_ssu_arc"/>
</dbReference>
<dbReference type="InterPro" id="IPR013748">
    <property type="entry name" value="Rep_factorC_C"/>
</dbReference>
<dbReference type="InterPro" id="IPR047854">
    <property type="entry name" value="RFC_lid"/>
</dbReference>
<dbReference type="NCBIfam" id="NF001679">
    <property type="entry name" value="PRK00440.1"/>
    <property type="match status" value="1"/>
</dbReference>
<dbReference type="PANTHER" id="PTHR11669">
    <property type="entry name" value="REPLICATION FACTOR C / DNA POLYMERASE III GAMMA-TAU SUBUNIT"/>
    <property type="match status" value="1"/>
</dbReference>
<dbReference type="PANTHER" id="PTHR11669:SF20">
    <property type="entry name" value="REPLICATION FACTOR C SUBUNIT 4"/>
    <property type="match status" value="1"/>
</dbReference>
<dbReference type="Pfam" id="PF00004">
    <property type="entry name" value="AAA"/>
    <property type="match status" value="1"/>
</dbReference>
<dbReference type="Pfam" id="PF21960">
    <property type="entry name" value="RCF1-5-like_lid"/>
    <property type="match status" value="1"/>
</dbReference>
<dbReference type="Pfam" id="PF08542">
    <property type="entry name" value="Rep_fac_C"/>
    <property type="match status" value="1"/>
</dbReference>
<dbReference type="SMART" id="SM00382">
    <property type="entry name" value="AAA"/>
    <property type="match status" value="1"/>
</dbReference>
<dbReference type="SUPFAM" id="SSF52540">
    <property type="entry name" value="P-loop containing nucleoside triphosphate hydrolases"/>
    <property type="match status" value="1"/>
</dbReference>
<dbReference type="SUPFAM" id="SSF48019">
    <property type="entry name" value="post-AAA+ oligomerization domain-like"/>
    <property type="match status" value="1"/>
</dbReference>
<accession>Q9HI47</accession>
<sequence>MIEIWTEKYRPKSLSEIYGEDENIQKLKSFVEKKEIPHLLFAGSVGTGKTSTAIALAIELFGDSWKENMVEMNASNENGIDVIRNKIKDIARIKPSNPLGFKILFLDEADQLTAEAQAALRRTMEIYSETTRFIFSCNYSSKIIPPIQSRTVVMRFRPVPDEYISRKLQEIAKNEGFQIDEESMHALVEVSAGDMRKAINVLQAVYTSGEISPKKIYEIIGYASPEKIQKMISRAINGLFDEAREIVDGMLIYDGLSGIDIVRSLHSYVRSSMISPKQKIEIIKALADAEFRIVEGSNDRIQLDALIAKLAEIGSRTD</sequence>
<name>RFCS_THEAC</name>
<gene>
    <name evidence="1" type="primary">rfcS</name>
    <name type="ordered locus">Ta1500</name>
</gene>